<feature type="chain" id="PRO_0000365600" description="Putative cyclin-H">
    <location>
        <begin position="1"/>
        <end position="286"/>
    </location>
</feature>
<feature type="domain" description="Cyclin N-terminal">
    <location>
        <begin position="79"/>
        <end position="148"/>
    </location>
</feature>
<feature type="region of interest" description="Disordered" evidence="2">
    <location>
        <begin position="235"/>
        <end position="286"/>
    </location>
</feature>
<gene>
    <name type="primary">cycH</name>
    <name type="ORF">DDB_G0268668</name>
</gene>
<dbReference type="EMBL" id="AAFI02000004">
    <property type="protein sequence ID" value="EAL72923.1"/>
    <property type="molecule type" value="Genomic_DNA"/>
</dbReference>
<dbReference type="RefSeq" id="XP_646851.1">
    <property type="nucleotide sequence ID" value="XM_641759.1"/>
</dbReference>
<dbReference type="SMR" id="Q55F19"/>
<dbReference type="FunCoup" id="Q55F19">
    <property type="interactions" value="753"/>
</dbReference>
<dbReference type="STRING" id="44689.Q55F19"/>
<dbReference type="PaxDb" id="44689-DDB0231776"/>
<dbReference type="EnsemblProtists" id="EAL72923">
    <property type="protein sequence ID" value="EAL72923"/>
    <property type="gene ID" value="DDB_G0268668"/>
</dbReference>
<dbReference type="GeneID" id="8616534"/>
<dbReference type="KEGG" id="ddi:DDB_G0268668"/>
<dbReference type="dictyBase" id="DDB_G0268668">
    <property type="gene designation" value="cycH"/>
</dbReference>
<dbReference type="VEuPathDB" id="AmoebaDB:DDB_G0268668"/>
<dbReference type="eggNOG" id="KOG2496">
    <property type="taxonomic scope" value="Eukaryota"/>
</dbReference>
<dbReference type="HOGENOM" id="CLU_022620_4_2_1"/>
<dbReference type="InParanoid" id="Q55F19"/>
<dbReference type="OMA" id="FRVEQNT"/>
<dbReference type="PhylomeDB" id="Q55F19"/>
<dbReference type="Reactome" id="R-DDI-113418">
    <property type="pathway name" value="Formation of the Early Elongation Complex"/>
</dbReference>
<dbReference type="Reactome" id="R-DDI-5696395">
    <property type="pathway name" value="Formation of Incision Complex in GG-NER"/>
</dbReference>
<dbReference type="Reactome" id="R-DDI-674695">
    <property type="pathway name" value="RNA Polymerase II Pre-transcription Events"/>
</dbReference>
<dbReference type="Reactome" id="R-DDI-6781823">
    <property type="pathway name" value="Formation of TC-NER Pre-Incision Complex"/>
</dbReference>
<dbReference type="Reactome" id="R-DDI-6782135">
    <property type="pathway name" value="Dual incision in TC-NER"/>
</dbReference>
<dbReference type="Reactome" id="R-DDI-6782210">
    <property type="pathway name" value="Gap-filling DNA repair synthesis and ligation in TC-NER"/>
</dbReference>
<dbReference type="Reactome" id="R-DDI-6796648">
    <property type="pathway name" value="TP53 Regulates Transcription of DNA Repair Genes"/>
</dbReference>
<dbReference type="Reactome" id="R-DDI-72086">
    <property type="pathway name" value="mRNA Capping"/>
</dbReference>
<dbReference type="Reactome" id="R-DDI-73772">
    <property type="pathway name" value="RNA Polymerase I Promoter Escape"/>
</dbReference>
<dbReference type="Reactome" id="R-DDI-73776">
    <property type="pathway name" value="RNA Polymerase II Promoter Escape"/>
</dbReference>
<dbReference type="Reactome" id="R-DDI-73779">
    <property type="pathway name" value="RNA Polymerase II Transcription Pre-Initiation And Promoter Opening"/>
</dbReference>
<dbReference type="Reactome" id="R-DDI-75953">
    <property type="pathway name" value="RNA Polymerase II Transcription Initiation"/>
</dbReference>
<dbReference type="Reactome" id="R-DDI-76042">
    <property type="pathway name" value="RNA Polymerase II Transcription Initiation And Promoter Clearance"/>
</dbReference>
<dbReference type="Reactome" id="R-DDI-77075">
    <property type="pathway name" value="RNA Pol II CTD phosphorylation and interaction with CE"/>
</dbReference>
<dbReference type="PRO" id="PR:Q55F19"/>
<dbReference type="Proteomes" id="UP000002195">
    <property type="component" value="Chromosome 1"/>
</dbReference>
<dbReference type="GO" id="GO:0005634">
    <property type="term" value="C:nucleus"/>
    <property type="evidence" value="ECO:0000318"/>
    <property type="project" value="GO_Central"/>
</dbReference>
<dbReference type="GO" id="GO:0070985">
    <property type="term" value="C:transcription factor TFIIK complex"/>
    <property type="evidence" value="ECO:0000318"/>
    <property type="project" value="GO_Central"/>
</dbReference>
<dbReference type="GO" id="GO:0016538">
    <property type="term" value="F:cyclin-dependent protein serine/threonine kinase regulator activity"/>
    <property type="evidence" value="ECO:0000318"/>
    <property type="project" value="GO_Central"/>
</dbReference>
<dbReference type="GO" id="GO:0006357">
    <property type="term" value="P:regulation of transcription by RNA polymerase II"/>
    <property type="evidence" value="ECO:0007669"/>
    <property type="project" value="InterPro"/>
</dbReference>
<dbReference type="GO" id="GO:0006367">
    <property type="term" value="P:transcription initiation at RNA polymerase II promoter"/>
    <property type="evidence" value="ECO:0000318"/>
    <property type="project" value="GO_Central"/>
</dbReference>
<dbReference type="CDD" id="cd20524">
    <property type="entry name" value="CYCLIN_CCNH_rpt1"/>
    <property type="match status" value="1"/>
</dbReference>
<dbReference type="FunFam" id="1.10.472.10:FF:000378">
    <property type="entry name" value="Putative cyclin-H"/>
    <property type="match status" value="1"/>
</dbReference>
<dbReference type="Gene3D" id="1.10.472.10">
    <property type="entry name" value="Cyclin-like"/>
    <property type="match status" value="2"/>
</dbReference>
<dbReference type="InterPro" id="IPR013763">
    <property type="entry name" value="Cyclin-like_dom"/>
</dbReference>
<dbReference type="InterPro" id="IPR036915">
    <property type="entry name" value="Cyclin-like_sf"/>
</dbReference>
<dbReference type="InterPro" id="IPR043198">
    <property type="entry name" value="Cyclin/Ssn8"/>
</dbReference>
<dbReference type="InterPro" id="IPR031658">
    <property type="entry name" value="Cyclin_C_2"/>
</dbReference>
<dbReference type="InterPro" id="IPR006671">
    <property type="entry name" value="Cyclin_N"/>
</dbReference>
<dbReference type="PANTHER" id="PTHR10026">
    <property type="entry name" value="CYCLIN"/>
    <property type="match status" value="1"/>
</dbReference>
<dbReference type="Pfam" id="PF16899">
    <property type="entry name" value="Cyclin_C_2"/>
    <property type="match status" value="1"/>
</dbReference>
<dbReference type="Pfam" id="PF00134">
    <property type="entry name" value="Cyclin_N"/>
    <property type="match status" value="1"/>
</dbReference>
<dbReference type="SMART" id="SM00385">
    <property type="entry name" value="CYCLIN"/>
    <property type="match status" value="1"/>
</dbReference>
<dbReference type="SUPFAM" id="SSF47954">
    <property type="entry name" value="Cyclin-like"/>
    <property type="match status" value="2"/>
</dbReference>
<comment type="function">
    <text evidence="1">May regulate cdk7 involved in transcription regulation and cell cycle progression.</text>
</comment>
<comment type="subcellular location">
    <subcellularLocation>
        <location evidence="1">Nucleus</location>
    </subcellularLocation>
</comment>
<comment type="similarity">
    <text evidence="3">Belongs to the cyclin family. Cyclin C subfamily.</text>
</comment>
<keyword id="KW-0131">Cell cycle</keyword>
<keyword id="KW-0195">Cyclin</keyword>
<keyword id="KW-0539">Nucleus</keyword>
<keyword id="KW-1185">Reference proteome</keyword>
<keyword id="KW-0804">Transcription</keyword>
<keyword id="KW-0805">Transcription regulation</keyword>
<proteinExistence type="inferred from homology"/>
<sequence length="286" mass="33050">MSYNESSQIKYWMFNNEGLKKLREQCNNQHKQVILEKTPSSEPNILSPDDELSLIHYYETKTLEIAMALNLPDKVSAPAIIYIKRFYLKNSIMQYGAKLVMLSCLFIACKTEDNHLDIDYYSNITKASPSDITNLEIIILESLNFNLIVYHPFRPMYGYILDINDNSAIYNNTNGVSPIKFDTLWETCKKSIQKSLFSDCCFEFHPQIIALACLNLNWDGFNMYCINNNNNNNNNNNNNNNNNNNNNNNNNNNNNNNNNNNNNNNNNNNNNNNNNNNNNNNNNLLL</sequence>
<accession>Q55F19</accession>
<protein>
    <recommendedName>
        <fullName>Putative cyclin-H</fullName>
    </recommendedName>
</protein>
<reference key="1">
    <citation type="journal article" date="2005" name="Nature">
        <title>The genome of the social amoeba Dictyostelium discoideum.</title>
        <authorList>
            <person name="Eichinger L."/>
            <person name="Pachebat J.A."/>
            <person name="Gloeckner G."/>
            <person name="Rajandream M.A."/>
            <person name="Sucgang R."/>
            <person name="Berriman M."/>
            <person name="Song J."/>
            <person name="Olsen R."/>
            <person name="Szafranski K."/>
            <person name="Xu Q."/>
            <person name="Tunggal B."/>
            <person name="Kummerfeld S."/>
            <person name="Madera M."/>
            <person name="Konfortov B.A."/>
            <person name="Rivero F."/>
            <person name="Bankier A.T."/>
            <person name="Lehmann R."/>
            <person name="Hamlin N."/>
            <person name="Davies R."/>
            <person name="Gaudet P."/>
            <person name="Fey P."/>
            <person name="Pilcher K."/>
            <person name="Chen G."/>
            <person name="Saunders D."/>
            <person name="Sodergren E.J."/>
            <person name="Davis P."/>
            <person name="Kerhornou A."/>
            <person name="Nie X."/>
            <person name="Hall N."/>
            <person name="Anjard C."/>
            <person name="Hemphill L."/>
            <person name="Bason N."/>
            <person name="Farbrother P."/>
            <person name="Desany B."/>
            <person name="Just E."/>
            <person name="Morio T."/>
            <person name="Rost R."/>
            <person name="Churcher C.M."/>
            <person name="Cooper J."/>
            <person name="Haydock S."/>
            <person name="van Driessche N."/>
            <person name="Cronin A."/>
            <person name="Goodhead I."/>
            <person name="Muzny D.M."/>
            <person name="Mourier T."/>
            <person name="Pain A."/>
            <person name="Lu M."/>
            <person name="Harper D."/>
            <person name="Lindsay R."/>
            <person name="Hauser H."/>
            <person name="James K.D."/>
            <person name="Quiles M."/>
            <person name="Madan Babu M."/>
            <person name="Saito T."/>
            <person name="Buchrieser C."/>
            <person name="Wardroper A."/>
            <person name="Felder M."/>
            <person name="Thangavelu M."/>
            <person name="Johnson D."/>
            <person name="Knights A."/>
            <person name="Loulseged H."/>
            <person name="Mungall K.L."/>
            <person name="Oliver K."/>
            <person name="Price C."/>
            <person name="Quail M.A."/>
            <person name="Urushihara H."/>
            <person name="Hernandez J."/>
            <person name="Rabbinowitsch E."/>
            <person name="Steffen D."/>
            <person name="Sanders M."/>
            <person name="Ma J."/>
            <person name="Kohara Y."/>
            <person name="Sharp S."/>
            <person name="Simmonds M.N."/>
            <person name="Spiegler S."/>
            <person name="Tivey A."/>
            <person name="Sugano S."/>
            <person name="White B."/>
            <person name="Walker D."/>
            <person name="Woodward J.R."/>
            <person name="Winckler T."/>
            <person name="Tanaka Y."/>
            <person name="Shaulsky G."/>
            <person name="Schleicher M."/>
            <person name="Weinstock G.M."/>
            <person name="Rosenthal A."/>
            <person name="Cox E.C."/>
            <person name="Chisholm R.L."/>
            <person name="Gibbs R.A."/>
            <person name="Loomis W.F."/>
            <person name="Platzer M."/>
            <person name="Kay R.R."/>
            <person name="Williams J.G."/>
            <person name="Dear P.H."/>
            <person name="Noegel A.A."/>
            <person name="Barrell B.G."/>
            <person name="Kuspa A."/>
        </authorList>
    </citation>
    <scope>NUCLEOTIDE SEQUENCE [LARGE SCALE GENOMIC DNA]</scope>
    <source>
        <strain>AX4</strain>
    </source>
</reference>
<evidence type="ECO:0000250" key="1"/>
<evidence type="ECO:0000256" key="2">
    <source>
        <dbReference type="SAM" id="MobiDB-lite"/>
    </source>
</evidence>
<evidence type="ECO:0000305" key="3"/>
<name>CCNH_DICDI</name>
<organism>
    <name type="scientific">Dictyostelium discoideum</name>
    <name type="common">Social amoeba</name>
    <dbReference type="NCBI Taxonomy" id="44689"/>
    <lineage>
        <taxon>Eukaryota</taxon>
        <taxon>Amoebozoa</taxon>
        <taxon>Evosea</taxon>
        <taxon>Eumycetozoa</taxon>
        <taxon>Dictyostelia</taxon>
        <taxon>Dictyosteliales</taxon>
        <taxon>Dictyosteliaceae</taxon>
        <taxon>Dictyostelium</taxon>
    </lineage>
</organism>